<name>CHCH7_XENTR</name>
<keyword id="KW-1015">Disulfide bond</keyword>
<keyword id="KW-0496">Mitochondrion</keyword>
<keyword id="KW-1185">Reference proteome</keyword>
<accession>Q28GG4</accession>
<protein>
    <recommendedName>
        <fullName>Coiled-coil-helix-coiled-coil-helix domain-containing protein 7</fullName>
    </recommendedName>
</protein>
<organism>
    <name type="scientific">Xenopus tropicalis</name>
    <name type="common">Western clawed frog</name>
    <name type="synonym">Silurana tropicalis</name>
    <dbReference type="NCBI Taxonomy" id="8364"/>
    <lineage>
        <taxon>Eukaryota</taxon>
        <taxon>Metazoa</taxon>
        <taxon>Chordata</taxon>
        <taxon>Craniata</taxon>
        <taxon>Vertebrata</taxon>
        <taxon>Euteleostomi</taxon>
        <taxon>Amphibia</taxon>
        <taxon>Batrachia</taxon>
        <taxon>Anura</taxon>
        <taxon>Pipoidea</taxon>
        <taxon>Pipidae</taxon>
        <taxon>Xenopodinae</taxon>
        <taxon>Xenopus</taxon>
        <taxon>Silurana</taxon>
    </lineage>
</organism>
<dbReference type="EMBL" id="CR761397">
    <property type="protein sequence ID" value="CAJ81432.1"/>
    <property type="molecule type" value="mRNA"/>
</dbReference>
<dbReference type="RefSeq" id="NP_001017090.1">
    <property type="nucleotide sequence ID" value="NM_001017090.1"/>
</dbReference>
<dbReference type="RefSeq" id="XP_012820228.1">
    <property type="nucleotide sequence ID" value="XM_012964774.2"/>
</dbReference>
<dbReference type="RefSeq" id="XP_012820229.1">
    <property type="nucleotide sequence ID" value="XM_012964775.2"/>
</dbReference>
<dbReference type="RefSeq" id="XP_012820230.1">
    <property type="nucleotide sequence ID" value="XM_012964776.3"/>
</dbReference>
<dbReference type="RefSeq" id="XP_012820231.1">
    <property type="nucleotide sequence ID" value="XM_012964777.3"/>
</dbReference>
<dbReference type="RefSeq" id="XP_031759259.1">
    <property type="nucleotide sequence ID" value="XM_031903399.1"/>
</dbReference>
<dbReference type="SMR" id="Q28GG4"/>
<dbReference type="FunCoup" id="Q28GG4">
    <property type="interactions" value="153"/>
</dbReference>
<dbReference type="STRING" id="8364.ENSXETP00000040743"/>
<dbReference type="PaxDb" id="8364-ENSXETP00000020655"/>
<dbReference type="GeneID" id="549844"/>
<dbReference type="KEGG" id="xtr:549844"/>
<dbReference type="AGR" id="Xenbase:XB-GENE-1001357"/>
<dbReference type="CTD" id="79145"/>
<dbReference type="Xenbase" id="XB-GENE-1001357">
    <property type="gene designation" value="chchd7"/>
</dbReference>
<dbReference type="eggNOG" id="KOG4618">
    <property type="taxonomic scope" value="Eukaryota"/>
</dbReference>
<dbReference type="HOGENOM" id="CLU_175044_1_0_1"/>
<dbReference type="InParanoid" id="Q28GG4"/>
<dbReference type="OMA" id="QELSYKC"/>
<dbReference type="OrthoDB" id="9971592at2759"/>
<dbReference type="PhylomeDB" id="Q28GG4"/>
<dbReference type="TreeFam" id="TF300284"/>
<dbReference type="Proteomes" id="UP000008143">
    <property type="component" value="Chromosome 6"/>
</dbReference>
<dbReference type="Bgee" id="ENSXETG00000026434">
    <property type="expression patterns" value="Expressed in egg cell and 15 other cell types or tissues"/>
</dbReference>
<dbReference type="GO" id="GO:0005758">
    <property type="term" value="C:mitochondrial intermembrane space"/>
    <property type="evidence" value="ECO:0007669"/>
    <property type="project" value="UniProtKB-SubCell"/>
</dbReference>
<dbReference type="InterPro" id="IPR010625">
    <property type="entry name" value="CHCH"/>
</dbReference>
<dbReference type="InterPro" id="IPR051040">
    <property type="entry name" value="COX23"/>
</dbReference>
<dbReference type="InterPro" id="IPR009069">
    <property type="entry name" value="Cys_alpha_HP_mot_SF"/>
</dbReference>
<dbReference type="PANTHER" id="PTHR46811">
    <property type="entry name" value="COILED-COIL-HELIX-COILED-COIL-HELIX DOMAIN-CONTAINING PROTEIN 7"/>
    <property type="match status" value="1"/>
</dbReference>
<dbReference type="PANTHER" id="PTHR46811:SF1">
    <property type="entry name" value="COILED-COIL-HELIX-COILED-COIL-HELIX DOMAIN-CONTAINING PROTEIN 7"/>
    <property type="match status" value="1"/>
</dbReference>
<dbReference type="Pfam" id="PF06747">
    <property type="entry name" value="CHCH"/>
    <property type="match status" value="1"/>
</dbReference>
<dbReference type="SUPFAM" id="SSF47072">
    <property type="entry name" value="Cysteine alpha-hairpin motif"/>
    <property type="match status" value="1"/>
</dbReference>
<dbReference type="PROSITE" id="PS51808">
    <property type="entry name" value="CHCH"/>
    <property type="match status" value="1"/>
</dbReference>
<gene>
    <name type="primary">chchd7</name>
    <name type="ORF">TEgg119d05.1</name>
</gene>
<sequence length="85" mass="10280">MMSRNRRMRDLDSNPCLEETDASTKCMDDNRYEKDLCTPYFVKYKNCRKFWNGIMVTRRREGTVPYMPTAEERKHILESMKSLPY</sequence>
<evidence type="ECO:0000255" key="1">
    <source>
        <dbReference type="PROSITE-ProRule" id="PRU01150"/>
    </source>
</evidence>
<evidence type="ECO:0000305" key="2"/>
<reference key="1">
    <citation type="submission" date="2006-10" db="EMBL/GenBank/DDBJ databases">
        <authorList>
            <consortium name="Sanger Xenopus tropicalis EST/cDNA project"/>
        </authorList>
    </citation>
    <scope>NUCLEOTIDE SEQUENCE [LARGE SCALE MRNA]</scope>
    <source>
        <tissue>Egg</tissue>
    </source>
</reference>
<comment type="subcellular location">
    <subcellularLocation>
        <location evidence="2">Mitochondrion intermembrane space</location>
    </subcellularLocation>
</comment>
<comment type="similarity">
    <text evidence="2">Belongs to the CHCHD7 family.</text>
</comment>
<feature type="chain" id="PRO_0000289261" description="Coiled-coil-helix-coiled-coil-helix domain-containing protein 7">
    <location>
        <begin position="1"/>
        <end position="85"/>
    </location>
</feature>
<feature type="domain" description="CHCH" evidence="1">
    <location>
        <begin position="13"/>
        <end position="55"/>
    </location>
</feature>
<feature type="short sequence motif" description="Cx9C motif 1" evidence="1">
    <location>
        <begin position="16"/>
        <end position="26"/>
    </location>
</feature>
<feature type="short sequence motif" description="Cx9C motif 2" evidence="1">
    <location>
        <begin position="37"/>
        <end position="47"/>
    </location>
</feature>
<feature type="disulfide bond" evidence="1">
    <location>
        <begin position="16"/>
        <end position="47"/>
    </location>
</feature>
<feature type="disulfide bond" evidence="1">
    <location>
        <begin position="26"/>
        <end position="37"/>
    </location>
</feature>
<proteinExistence type="inferred from homology"/>